<organism>
    <name type="scientific">Saccharomyces cerevisiae (strain YJM789)</name>
    <name type="common">Baker's yeast</name>
    <dbReference type="NCBI Taxonomy" id="307796"/>
    <lineage>
        <taxon>Eukaryota</taxon>
        <taxon>Fungi</taxon>
        <taxon>Dikarya</taxon>
        <taxon>Ascomycota</taxon>
        <taxon>Saccharomycotina</taxon>
        <taxon>Saccharomycetes</taxon>
        <taxon>Saccharomycetales</taxon>
        <taxon>Saccharomycetaceae</taxon>
        <taxon>Saccharomyces</taxon>
    </lineage>
</organism>
<keyword id="KW-0963">Cytoplasm</keyword>
<keyword id="KW-0539">Nucleus</keyword>
<keyword id="KW-0597">Phosphoprotein</keyword>
<comment type="subunit">
    <text evidence="1">Interacts with HRR25. May interact with SEC72.</text>
</comment>
<comment type="subcellular location">
    <subcellularLocation>
        <location evidence="1">Cytoplasm</location>
    </subcellularLocation>
    <subcellularLocation>
        <location evidence="1">Nucleus</location>
    </subcellularLocation>
</comment>
<comment type="similarity">
    <text evidence="3">Belongs to the HRI1 family.</text>
</comment>
<sequence>MPALLKRLLFQVGPHPNERTFTLSSVSTDGHYISLRPFVKPSGDELSFPFEWAFAGTNETVKVNDQGNGVVTQDFNFWLDTNVYLNVPNTHRGEVNTTWKNWDSGCVEETGAVYPFGADKESVSFRELWQPVDPSREDLVIVSPNNEKFSSNARSIVLKVTDEAYDGLVIVIGRWIQGFLSQKNNNTIEGLNFIRLLEKDSGKSEFLLSYGKEVNKIPQSYENLKKGSTVTSNGLNWEVIEYHA</sequence>
<feature type="chain" id="PRO_0000410815" description="Protein HRI1">
    <location>
        <begin position="1"/>
        <end position="244"/>
    </location>
</feature>
<feature type="modified residue" description="Phosphoserine" evidence="2">
    <location>
        <position position="143"/>
    </location>
</feature>
<evidence type="ECO:0000250" key="1"/>
<evidence type="ECO:0000250" key="2">
    <source>
        <dbReference type="UniProtKB" id="Q05905"/>
    </source>
</evidence>
<evidence type="ECO:0000305" key="3"/>
<proteinExistence type="inferred from homology"/>
<gene>
    <name type="primary">HRI1</name>
    <name type="ORF">SCY_3860</name>
</gene>
<accession>A7A1I2</accession>
<dbReference type="EMBL" id="AAFW02000170">
    <property type="protein sequence ID" value="EDN59386.1"/>
    <property type="molecule type" value="Genomic_DNA"/>
</dbReference>
<dbReference type="SMR" id="A7A1I2"/>
<dbReference type="HOGENOM" id="CLU_097607_0_0_1"/>
<dbReference type="Proteomes" id="UP000007060">
    <property type="component" value="Unassembled WGS sequence"/>
</dbReference>
<dbReference type="GO" id="GO:0005737">
    <property type="term" value="C:cytoplasm"/>
    <property type="evidence" value="ECO:0007669"/>
    <property type="project" value="UniProtKB-SubCell"/>
</dbReference>
<dbReference type="GO" id="GO:0005634">
    <property type="term" value="C:nucleus"/>
    <property type="evidence" value="ECO:0007669"/>
    <property type="project" value="UniProtKB-SubCell"/>
</dbReference>
<dbReference type="CDD" id="cd11693">
    <property type="entry name" value="HRI1_C_like"/>
    <property type="match status" value="1"/>
</dbReference>
<dbReference type="CDD" id="cd11692">
    <property type="entry name" value="HRI1_N_like"/>
    <property type="match status" value="1"/>
</dbReference>
<dbReference type="Gene3D" id="2.40.128.310">
    <property type="entry name" value="Protein HRI1, C-terminal domain"/>
    <property type="match status" value="1"/>
</dbReference>
<dbReference type="Gene3D" id="2.40.128.320">
    <property type="entry name" value="Protein HRI1, N-terminal domain"/>
    <property type="match status" value="1"/>
</dbReference>
<dbReference type="InterPro" id="IPR031818">
    <property type="entry name" value="Hri1"/>
</dbReference>
<dbReference type="InterPro" id="IPR038744">
    <property type="entry name" value="Hri1_N"/>
</dbReference>
<dbReference type="InterPro" id="IPR043047">
    <property type="entry name" value="Hri1_N_sf"/>
</dbReference>
<dbReference type="Pfam" id="PF16815">
    <property type="entry name" value="HRI1"/>
    <property type="match status" value="1"/>
</dbReference>
<name>HRI1_YEAS7</name>
<reference key="1">
    <citation type="journal article" date="2007" name="Proc. Natl. Acad. Sci. U.S.A.">
        <title>Genome sequencing and comparative analysis of Saccharomyces cerevisiae strain YJM789.</title>
        <authorList>
            <person name="Wei W."/>
            <person name="McCusker J.H."/>
            <person name="Hyman R.W."/>
            <person name="Jones T."/>
            <person name="Ning Y."/>
            <person name="Cao Z."/>
            <person name="Gu Z."/>
            <person name="Bruno D."/>
            <person name="Miranda M."/>
            <person name="Nguyen M."/>
            <person name="Wilhelmy J."/>
            <person name="Komp C."/>
            <person name="Tamse R."/>
            <person name="Wang X."/>
            <person name="Jia P."/>
            <person name="Luedi P."/>
            <person name="Oefner P.J."/>
            <person name="David L."/>
            <person name="Dietrich F.S."/>
            <person name="Li Y."/>
            <person name="Davis R.W."/>
            <person name="Steinmetz L.M."/>
        </authorList>
    </citation>
    <scope>NUCLEOTIDE SEQUENCE [LARGE SCALE GENOMIC DNA]</scope>
    <source>
        <strain>YJM789</strain>
    </source>
</reference>
<protein>
    <recommendedName>
        <fullName>Protein HRI1</fullName>
    </recommendedName>
    <alternativeName>
        <fullName>HRR25-interacting protein 1</fullName>
    </alternativeName>
</protein>